<dbReference type="EC" id="2.7.4.22" evidence="1"/>
<dbReference type="EMBL" id="CP000488">
    <property type="protein sequence ID" value="ABL02044.1"/>
    <property type="molecule type" value="Genomic_DNA"/>
</dbReference>
<dbReference type="SMR" id="A1AVT7"/>
<dbReference type="STRING" id="413404.Rmag_0262"/>
<dbReference type="KEGG" id="rma:Rmag_0262"/>
<dbReference type="eggNOG" id="COG0528">
    <property type="taxonomic scope" value="Bacteria"/>
</dbReference>
<dbReference type="HOGENOM" id="CLU_033861_0_1_6"/>
<dbReference type="OrthoDB" id="9807458at2"/>
<dbReference type="UniPathway" id="UPA00159">
    <property type="reaction ID" value="UER00275"/>
</dbReference>
<dbReference type="Proteomes" id="UP000002587">
    <property type="component" value="Chromosome"/>
</dbReference>
<dbReference type="GO" id="GO:0005829">
    <property type="term" value="C:cytosol"/>
    <property type="evidence" value="ECO:0007669"/>
    <property type="project" value="TreeGrafter"/>
</dbReference>
<dbReference type="GO" id="GO:0005524">
    <property type="term" value="F:ATP binding"/>
    <property type="evidence" value="ECO:0007669"/>
    <property type="project" value="UniProtKB-KW"/>
</dbReference>
<dbReference type="GO" id="GO:0033862">
    <property type="term" value="F:UMP kinase activity"/>
    <property type="evidence" value="ECO:0007669"/>
    <property type="project" value="UniProtKB-EC"/>
</dbReference>
<dbReference type="GO" id="GO:0044210">
    <property type="term" value="P:'de novo' CTP biosynthetic process"/>
    <property type="evidence" value="ECO:0007669"/>
    <property type="project" value="UniProtKB-UniRule"/>
</dbReference>
<dbReference type="GO" id="GO:0006225">
    <property type="term" value="P:UDP biosynthetic process"/>
    <property type="evidence" value="ECO:0007669"/>
    <property type="project" value="TreeGrafter"/>
</dbReference>
<dbReference type="CDD" id="cd04254">
    <property type="entry name" value="AAK_UMPK-PyrH-Ec"/>
    <property type="match status" value="1"/>
</dbReference>
<dbReference type="FunFam" id="3.40.1160.10:FF:000001">
    <property type="entry name" value="Uridylate kinase"/>
    <property type="match status" value="1"/>
</dbReference>
<dbReference type="Gene3D" id="3.40.1160.10">
    <property type="entry name" value="Acetylglutamate kinase-like"/>
    <property type="match status" value="1"/>
</dbReference>
<dbReference type="HAMAP" id="MF_01220_B">
    <property type="entry name" value="PyrH_B"/>
    <property type="match status" value="1"/>
</dbReference>
<dbReference type="InterPro" id="IPR036393">
    <property type="entry name" value="AceGlu_kinase-like_sf"/>
</dbReference>
<dbReference type="InterPro" id="IPR001048">
    <property type="entry name" value="Asp/Glu/Uridylate_kinase"/>
</dbReference>
<dbReference type="InterPro" id="IPR011817">
    <property type="entry name" value="Uridylate_kinase"/>
</dbReference>
<dbReference type="InterPro" id="IPR015963">
    <property type="entry name" value="Uridylate_kinase_bac"/>
</dbReference>
<dbReference type="NCBIfam" id="TIGR02075">
    <property type="entry name" value="pyrH_bact"/>
    <property type="match status" value="1"/>
</dbReference>
<dbReference type="PANTHER" id="PTHR42833">
    <property type="entry name" value="URIDYLATE KINASE"/>
    <property type="match status" value="1"/>
</dbReference>
<dbReference type="PANTHER" id="PTHR42833:SF4">
    <property type="entry name" value="URIDYLATE KINASE PUMPKIN, CHLOROPLASTIC"/>
    <property type="match status" value="1"/>
</dbReference>
<dbReference type="Pfam" id="PF00696">
    <property type="entry name" value="AA_kinase"/>
    <property type="match status" value="1"/>
</dbReference>
<dbReference type="PIRSF" id="PIRSF005650">
    <property type="entry name" value="Uridylate_kin"/>
    <property type="match status" value="1"/>
</dbReference>
<dbReference type="SUPFAM" id="SSF53633">
    <property type="entry name" value="Carbamate kinase-like"/>
    <property type="match status" value="1"/>
</dbReference>
<proteinExistence type="inferred from homology"/>
<evidence type="ECO:0000255" key="1">
    <source>
        <dbReference type="HAMAP-Rule" id="MF_01220"/>
    </source>
</evidence>
<comment type="function">
    <text evidence="1">Catalyzes the reversible phosphorylation of UMP to UDP.</text>
</comment>
<comment type="catalytic activity">
    <reaction evidence="1">
        <text>UMP + ATP = UDP + ADP</text>
        <dbReference type="Rhea" id="RHEA:24400"/>
        <dbReference type="ChEBI" id="CHEBI:30616"/>
        <dbReference type="ChEBI" id="CHEBI:57865"/>
        <dbReference type="ChEBI" id="CHEBI:58223"/>
        <dbReference type="ChEBI" id="CHEBI:456216"/>
        <dbReference type="EC" id="2.7.4.22"/>
    </reaction>
</comment>
<comment type="activity regulation">
    <text evidence="1">Inhibited by UTP.</text>
</comment>
<comment type="pathway">
    <text evidence="1">Pyrimidine metabolism; CTP biosynthesis via de novo pathway; UDP from UMP (UMPK route): step 1/1.</text>
</comment>
<comment type="subunit">
    <text evidence="1">Homohexamer.</text>
</comment>
<comment type="subcellular location">
    <subcellularLocation>
        <location evidence="1">Cytoplasm</location>
    </subcellularLocation>
</comment>
<comment type="similarity">
    <text evidence="1">Belongs to the UMP kinase family.</text>
</comment>
<name>PYRH_RUTMC</name>
<protein>
    <recommendedName>
        <fullName evidence="1">Uridylate kinase</fullName>
        <shortName evidence="1">UK</shortName>
        <ecNumber evidence="1">2.7.4.22</ecNumber>
    </recommendedName>
    <alternativeName>
        <fullName evidence="1">Uridine monophosphate kinase</fullName>
        <shortName evidence="1">UMP kinase</shortName>
        <shortName evidence="1">UMPK</shortName>
    </alternativeName>
</protein>
<organism>
    <name type="scientific">Ruthia magnifica subsp. Calyptogena magnifica</name>
    <dbReference type="NCBI Taxonomy" id="413404"/>
    <lineage>
        <taxon>Bacteria</taxon>
        <taxon>Pseudomonadati</taxon>
        <taxon>Pseudomonadota</taxon>
        <taxon>Gammaproteobacteria</taxon>
        <taxon>Candidatus Pseudothioglobaceae</taxon>
        <taxon>Candidatus Ruthturnera</taxon>
    </lineage>
</organism>
<accession>A1AVT7</accession>
<feature type="chain" id="PRO_0000323947" description="Uridylate kinase">
    <location>
        <begin position="1"/>
        <end position="239"/>
    </location>
</feature>
<feature type="binding site" evidence="1">
    <location>
        <begin position="12"/>
        <end position="15"/>
    </location>
    <ligand>
        <name>ATP</name>
        <dbReference type="ChEBI" id="CHEBI:30616"/>
    </ligand>
</feature>
<feature type="binding site" evidence="1">
    <location>
        <position position="53"/>
    </location>
    <ligand>
        <name>UMP</name>
        <dbReference type="ChEBI" id="CHEBI:57865"/>
    </ligand>
</feature>
<feature type="binding site" evidence="1">
    <location>
        <position position="54"/>
    </location>
    <ligand>
        <name>ATP</name>
        <dbReference type="ChEBI" id="CHEBI:30616"/>
    </ligand>
</feature>
<feature type="binding site" evidence="1">
    <location>
        <position position="58"/>
    </location>
    <ligand>
        <name>ATP</name>
        <dbReference type="ChEBI" id="CHEBI:30616"/>
    </ligand>
</feature>
<feature type="binding site" evidence="1">
    <location>
        <position position="73"/>
    </location>
    <ligand>
        <name>UMP</name>
        <dbReference type="ChEBI" id="CHEBI:57865"/>
    </ligand>
</feature>
<feature type="binding site" evidence="1">
    <location>
        <begin position="135"/>
        <end position="142"/>
    </location>
    <ligand>
        <name>UMP</name>
        <dbReference type="ChEBI" id="CHEBI:57865"/>
    </ligand>
</feature>
<feature type="binding site" evidence="1">
    <location>
        <position position="162"/>
    </location>
    <ligand>
        <name>ATP</name>
        <dbReference type="ChEBI" id="CHEBI:30616"/>
    </ligand>
</feature>
<feature type="binding site" evidence="1">
    <location>
        <position position="168"/>
    </location>
    <ligand>
        <name>ATP</name>
        <dbReference type="ChEBI" id="CHEBI:30616"/>
    </ligand>
</feature>
<feature type="binding site" evidence="1">
    <location>
        <position position="171"/>
    </location>
    <ligand>
        <name>ATP</name>
        <dbReference type="ChEBI" id="CHEBI:30616"/>
    </ligand>
</feature>
<reference key="1">
    <citation type="journal article" date="2007" name="Science">
        <title>The Calyptogena magnifica chemoautotrophic symbiont genome.</title>
        <authorList>
            <person name="Newton I.L.G."/>
            <person name="Woyke T."/>
            <person name="Auchtung T.A."/>
            <person name="Dilly G.F."/>
            <person name="Dutton R.J."/>
            <person name="Fisher M.C."/>
            <person name="Fontanez K.M."/>
            <person name="Lau E."/>
            <person name="Stewart F.J."/>
            <person name="Richardson P.M."/>
            <person name="Barry K.W."/>
            <person name="Saunders E."/>
            <person name="Detter J.C."/>
            <person name="Wu D."/>
            <person name="Eisen J.A."/>
            <person name="Cavanaugh C.M."/>
        </authorList>
    </citation>
    <scope>NUCLEOTIDE SEQUENCE [LARGE SCALE GENOMIC DNA]</scope>
</reference>
<keyword id="KW-0067">ATP-binding</keyword>
<keyword id="KW-0963">Cytoplasm</keyword>
<keyword id="KW-0418">Kinase</keyword>
<keyword id="KW-0547">Nucleotide-binding</keyword>
<keyword id="KW-0665">Pyrimidine biosynthesis</keyword>
<keyword id="KW-0808">Transferase</keyword>
<sequence length="239" mass="25465">MLMSKYKRILLKLSGEALANTENIIDPVALNKVVNIIKSVLSQNVEIAIVVGGGNIFRGAVLAQAGMNRITGDHMGMLATVMNALAIADVCQKNKVDTLVMSGFSIGGGVCDSINHVHAKQALNEGKVVIFCAGTGSPCFTTDTGAALRAIEIDADAVFKATKVDGIYTSDPIKNSDAKRYDSLSFDGAIEKNLQIMDVSAFALCREHDLEICVFSMLENTNTLSDILKGKPLGTIVRK</sequence>
<gene>
    <name evidence="1" type="primary">pyrH</name>
    <name type="ordered locus">Rmag_0262</name>
</gene>